<evidence type="ECO:0000255" key="1">
    <source>
        <dbReference type="HAMAP-Rule" id="MF_01021"/>
    </source>
</evidence>
<gene>
    <name evidence="1" type="primary">hisI</name>
    <name type="ordered locus">Blon_1064</name>
    <name type="ordered locus">BLIJ_1088</name>
</gene>
<comment type="function">
    <text evidence="1">Catalyzes the hydrolysis of the adenine ring of phosphoribosyl-AMP.</text>
</comment>
<comment type="catalytic activity">
    <reaction evidence="1">
        <text>1-(5-phospho-beta-D-ribosyl)-5'-AMP + H2O = 1-(5-phospho-beta-D-ribosyl)-5-[(5-phospho-beta-D-ribosylamino)methylideneamino]imidazole-4-carboxamide</text>
        <dbReference type="Rhea" id="RHEA:20049"/>
        <dbReference type="ChEBI" id="CHEBI:15377"/>
        <dbReference type="ChEBI" id="CHEBI:58435"/>
        <dbReference type="ChEBI" id="CHEBI:59457"/>
        <dbReference type="EC" id="3.5.4.19"/>
    </reaction>
</comment>
<comment type="cofactor">
    <cofactor evidence="1">
        <name>Mg(2+)</name>
        <dbReference type="ChEBI" id="CHEBI:18420"/>
    </cofactor>
    <text evidence="1">Binds 1 Mg(2+) ion per subunit.</text>
</comment>
<comment type="cofactor">
    <cofactor evidence="1">
        <name>Zn(2+)</name>
        <dbReference type="ChEBI" id="CHEBI:29105"/>
    </cofactor>
    <text evidence="1">Binds 1 zinc ion per subunit.</text>
</comment>
<comment type="pathway">
    <text evidence="1">Amino-acid biosynthesis; L-histidine biosynthesis; L-histidine from 5-phospho-alpha-D-ribose 1-diphosphate: step 3/9.</text>
</comment>
<comment type="subunit">
    <text evidence="1">Homodimer.</text>
</comment>
<comment type="subcellular location">
    <subcellularLocation>
        <location evidence="1">Cytoplasm</location>
    </subcellularLocation>
</comment>
<comment type="similarity">
    <text evidence="1">Belongs to the PRA-CH family.</text>
</comment>
<dbReference type="EC" id="3.5.4.19" evidence="1"/>
<dbReference type="EMBL" id="CP001095">
    <property type="protein sequence ID" value="ACJ52156.1"/>
    <property type="molecule type" value="Genomic_DNA"/>
</dbReference>
<dbReference type="EMBL" id="AP010889">
    <property type="protein sequence ID" value="BAJ68676.1"/>
    <property type="molecule type" value="Genomic_DNA"/>
</dbReference>
<dbReference type="RefSeq" id="WP_012577415.1">
    <property type="nucleotide sequence ID" value="NC_011593.1"/>
</dbReference>
<dbReference type="SMR" id="B7GQS6"/>
<dbReference type="KEGG" id="bln:Blon_1064"/>
<dbReference type="KEGG" id="blon:BLIJ_1088"/>
<dbReference type="PATRIC" id="fig|391904.8.peg.1085"/>
<dbReference type="HOGENOM" id="CLU_048577_5_1_11"/>
<dbReference type="UniPathway" id="UPA00031">
    <property type="reaction ID" value="UER00008"/>
</dbReference>
<dbReference type="Proteomes" id="UP000001360">
    <property type="component" value="Chromosome"/>
</dbReference>
<dbReference type="GO" id="GO:0005737">
    <property type="term" value="C:cytoplasm"/>
    <property type="evidence" value="ECO:0007669"/>
    <property type="project" value="UniProtKB-SubCell"/>
</dbReference>
<dbReference type="GO" id="GO:0000287">
    <property type="term" value="F:magnesium ion binding"/>
    <property type="evidence" value="ECO:0007669"/>
    <property type="project" value="UniProtKB-UniRule"/>
</dbReference>
<dbReference type="GO" id="GO:0004635">
    <property type="term" value="F:phosphoribosyl-AMP cyclohydrolase activity"/>
    <property type="evidence" value="ECO:0007669"/>
    <property type="project" value="UniProtKB-UniRule"/>
</dbReference>
<dbReference type="GO" id="GO:0008270">
    <property type="term" value="F:zinc ion binding"/>
    <property type="evidence" value="ECO:0007669"/>
    <property type="project" value="UniProtKB-UniRule"/>
</dbReference>
<dbReference type="GO" id="GO:0000105">
    <property type="term" value="P:L-histidine biosynthetic process"/>
    <property type="evidence" value="ECO:0007669"/>
    <property type="project" value="UniProtKB-UniRule"/>
</dbReference>
<dbReference type="FunFam" id="3.10.20.810:FF:000001">
    <property type="entry name" value="Histidine biosynthesis bifunctional protein HisIE"/>
    <property type="match status" value="1"/>
</dbReference>
<dbReference type="Gene3D" id="3.10.20.810">
    <property type="entry name" value="Phosphoribosyl-AMP cyclohydrolase"/>
    <property type="match status" value="1"/>
</dbReference>
<dbReference type="HAMAP" id="MF_01021">
    <property type="entry name" value="HisI"/>
    <property type="match status" value="1"/>
</dbReference>
<dbReference type="InterPro" id="IPR026660">
    <property type="entry name" value="PRA-CH"/>
</dbReference>
<dbReference type="InterPro" id="IPR002496">
    <property type="entry name" value="PRib_AMP_CycHydrolase_dom"/>
</dbReference>
<dbReference type="InterPro" id="IPR038019">
    <property type="entry name" value="PRib_AMP_CycHydrolase_sf"/>
</dbReference>
<dbReference type="NCBIfam" id="NF000768">
    <property type="entry name" value="PRK00051.1"/>
    <property type="match status" value="1"/>
</dbReference>
<dbReference type="PANTHER" id="PTHR42945">
    <property type="entry name" value="HISTIDINE BIOSYNTHESIS BIFUNCTIONAL PROTEIN"/>
    <property type="match status" value="1"/>
</dbReference>
<dbReference type="PANTHER" id="PTHR42945:SF11">
    <property type="entry name" value="PHOSPHORIBOSYL-AMP CYCLOHYDROLASE"/>
    <property type="match status" value="1"/>
</dbReference>
<dbReference type="Pfam" id="PF01502">
    <property type="entry name" value="PRA-CH"/>
    <property type="match status" value="1"/>
</dbReference>
<dbReference type="SUPFAM" id="SSF141734">
    <property type="entry name" value="HisI-like"/>
    <property type="match status" value="1"/>
</dbReference>
<reference key="1">
    <citation type="journal article" date="2008" name="Proc. Natl. Acad. Sci. U.S.A.">
        <title>The genome sequence of Bifidobacterium longum subsp. infantis reveals adaptations for milk utilization within the infant microbiome.</title>
        <authorList>
            <person name="Sela D.A."/>
            <person name="Chapman J."/>
            <person name="Adeuya A."/>
            <person name="Kim J.H."/>
            <person name="Chen F."/>
            <person name="Whitehead T.R."/>
            <person name="Lapidus A."/>
            <person name="Rokhsar D.S."/>
            <person name="Lebrilla C.B."/>
            <person name="German J.B."/>
            <person name="Price N.P."/>
            <person name="Richardson P.M."/>
            <person name="Mills D.A."/>
        </authorList>
    </citation>
    <scope>NUCLEOTIDE SEQUENCE [LARGE SCALE GENOMIC DNA]</scope>
    <source>
        <strain>ATCC 15697 / DSM 20088 / JCM 1222 / NCTC 11817 / S12</strain>
    </source>
</reference>
<reference key="2">
    <citation type="journal article" date="2011" name="Nature">
        <title>Bifidobacteria can protect from enteropathogenic infection through production of acetate.</title>
        <authorList>
            <person name="Fukuda S."/>
            <person name="Toh H."/>
            <person name="Hase K."/>
            <person name="Oshima K."/>
            <person name="Nakanishi Y."/>
            <person name="Yoshimura K."/>
            <person name="Tobe T."/>
            <person name="Clarke J.M."/>
            <person name="Topping D.L."/>
            <person name="Suzuki T."/>
            <person name="Taylor T.D."/>
            <person name="Itoh K."/>
            <person name="Kikuchi J."/>
            <person name="Morita H."/>
            <person name="Hattori M."/>
            <person name="Ohno H."/>
        </authorList>
    </citation>
    <scope>NUCLEOTIDE SEQUENCE [LARGE SCALE GENOMIC DNA]</scope>
    <source>
        <strain>ATCC 15697 / DSM 20088 / JCM 1222 / NCTC 11817 / S12</strain>
    </source>
</reference>
<proteinExistence type="inferred from homology"/>
<accession>B7GQS6</accession>
<accession>E8MJE9</accession>
<sequence length="136" mass="15113">MTDTTYDNSTELDPRIAARLKRDVKGLVAAVIQQYDTHEVLMVGYMNDEALRRTLTTGRVTFWSRSRQEYWRKGDTSGHVQYVKGVSLDCDGDALLVEVDQVGAACHTGKRSCFLEGGPLPVVEGHRPAEQQNGLS</sequence>
<name>HIS3_BIFLS</name>
<keyword id="KW-0028">Amino-acid biosynthesis</keyword>
<keyword id="KW-0963">Cytoplasm</keyword>
<keyword id="KW-0368">Histidine biosynthesis</keyword>
<keyword id="KW-0378">Hydrolase</keyword>
<keyword id="KW-0460">Magnesium</keyword>
<keyword id="KW-0479">Metal-binding</keyword>
<keyword id="KW-0862">Zinc</keyword>
<organism>
    <name type="scientific">Bifidobacterium longum subsp. infantis (strain ATCC 15697 / DSM 20088 / JCM 1222 / NCTC 11817 / S12)</name>
    <dbReference type="NCBI Taxonomy" id="391904"/>
    <lineage>
        <taxon>Bacteria</taxon>
        <taxon>Bacillati</taxon>
        <taxon>Actinomycetota</taxon>
        <taxon>Actinomycetes</taxon>
        <taxon>Bifidobacteriales</taxon>
        <taxon>Bifidobacteriaceae</taxon>
        <taxon>Bifidobacterium</taxon>
    </lineage>
</organism>
<protein>
    <recommendedName>
        <fullName evidence="1">Phosphoribosyl-AMP cyclohydrolase</fullName>
        <shortName evidence="1">PRA-CH</shortName>
        <ecNumber evidence="1">3.5.4.19</ecNumber>
    </recommendedName>
</protein>
<feature type="chain" id="PRO_1000149065" description="Phosphoribosyl-AMP cyclohydrolase">
    <location>
        <begin position="1"/>
        <end position="136"/>
    </location>
</feature>
<feature type="binding site" evidence="1">
    <location>
        <position position="89"/>
    </location>
    <ligand>
        <name>Mg(2+)</name>
        <dbReference type="ChEBI" id="CHEBI:18420"/>
    </ligand>
</feature>
<feature type="binding site" evidence="1">
    <location>
        <position position="90"/>
    </location>
    <ligand>
        <name>Zn(2+)</name>
        <dbReference type="ChEBI" id="CHEBI:29105"/>
        <note>ligand shared between dimeric partners</note>
    </ligand>
</feature>
<feature type="binding site" evidence="1">
    <location>
        <position position="91"/>
    </location>
    <ligand>
        <name>Mg(2+)</name>
        <dbReference type="ChEBI" id="CHEBI:18420"/>
    </ligand>
</feature>
<feature type="binding site" evidence="1">
    <location>
        <position position="93"/>
    </location>
    <ligand>
        <name>Mg(2+)</name>
        <dbReference type="ChEBI" id="CHEBI:18420"/>
    </ligand>
</feature>
<feature type="binding site" evidence="1">
    <location>
        <position position="106"/>
    </location>
    <ligand>
        <name>Zn(2+)</name>
        <dbReference type="ChEBI" id="CHEBI:29105"/>
        <note>ligand shared between dimeric partners</note>
    </ligand>
</feature>
<feature type="binding site" evidence="1">
    <location>
        <position position="113"/>
    </location>
    <ligand>
        <name>Zn(2+)</name>
        <dbReference type="ChEBI" id="CHEBI:29105"/>
        <note>ligand shared between dimeric partners</note>
    </ligand>
</feature>